<dbReference type="EC" id="3.6.1.31" evidence="1"/>
<dbReference type="EMBL" id="CP000708">
    <property type="protein sequence ID" value="ABQ61505.1"/>
    <property type="molecule type" value="Genomic_DNA"/>
</dbReference>
<dbReference type="RefSeq" id="WP_002965152.1">
    <property type="nucleotide sequence ID" value="NC_009505.1"/>
</dbReference>
<dbReference type="SMR" id="A5VT44"/>
<dbReference type="KEGG" id="bov:BOV_2006"/>
<dbReference type="HOGENOM" id="CLU_123337_1_1_5"/>
<dbReference type="PhylomeDB" id="A5VT44"/>
<dbReference type="UniPathway" id="UPA00031">
    <property type="reaction ID" value="UER00007"/>
</dbReference>
<dbReference type="Proteomes" id="UP000006383">
    <property type="component" value="Chromosome I"/>
</dbReference>
<dbReference type="GO" id="GO:0005737">
    <property type="term" value="C:cytoplasm"/>
    <property type="evidence" value="ECO:0007669"/>
    <property type="project" value="UniProtKB-SubCell"/>
</dbReference>
<dbReference type="GO" id="GO:0005524">
    <property type="term" value="F:ATP binding"/>
    <property type="evidence" value="ECO:0007669"/>
    <property type="project" value="UniProtKB-KW"/>
</dbReference>
<dbReference type="GO" id="GO:0004636">
    <property type="term" value="F:phosphoribosyl-ATP diphosphatase activity"/>
    <property type="evidence" value="ECO:0007669"/>
    <property type="project" value="UniProtKB-UniRule"/>
</dbReference>
<dbReference type="GO" id="GO:0000105">
    <property type="term" value="P:L-histidine biosynthetic process"/>
    <property type="evidence" value="ECO:0007669"/>
    <property type="project" value="UniProtKB-UniRule"/>
</dbReference>
<dbReference type="CDD" id="cd11534">
    <property type="entry name" value="NTP-PPase_HisIE_like"/>
    <property type="match status" value="1"/>
</dbReference>
<dbReference type="Gene3D" id="1.10.287.1080">
    <property type="entry name" value="MazG-like"/>
    <property type="match status" value="1"/>
</dbReference>
<dbReference type="HAMAP" id="MF_01020">
    <property type="entry name" value="HisE"/>
    <property type="match status" value="1"/>
</dbReference>
<dbReference type="InterPro" id="IPR008179">
    <property type="entry name" value="HisE"/>
</dbReference>
<dbReference type="InterPro" id="IPR021130">
    <property type="entry name" value="PRib-ATP_PPHydrolase-like"/>
</dbReference>
<dbReference type="NCBIfam" id="TIGR03188">
    <property type="entry name" value="histidine_hisI"/>
    <property type="match status" value="1"/>
</dbReference>
<dbReference type="NCBIfam" id="NF001613">
    <property type="entry name" value="PRK00400.1-5"/>
    <property type="match status" value="1"/>
</dbReference>
<dbReference type="PANTHER" id="PTHR42945">
    <property type="entry name" value="HISTIDINE BIOSYNTHESIS BIFUNCTIONAL PROTEIN"/>
    <property type="match status" value="1"/>
</dbReference>
<dbReference type="PANTHER" id="PTHR42945:SF9">
    <property type="entry name" value="HISTIDINE BIOSYNTHESIS BIFUNCTIONAL PROTEIN HISIE"/>
    <property type="match status" value="1"/>
</dbReference>
<dbReference type="Pfam" id="PF01503">
    <property type="entry name" value="PRA-PH"/>
    <property type="match status" value="1"/>
</dbReference>
<dbReference type="SUPFAM" id="SSF101386">
    <property type="entry name" value="all-alpha NTP pyrophosphatases"/>
    <property type="match status" value="1"/>
</dbReference>
<organism>
    <name type="scientific">Brucella ovis (strain ATCC 25840 / 63/290 / NCTC 10512)</name>
    <dbReference type="NCBI Taxonomy" id="444178"/>
    <lineage>
        <taxon>Bacteria</taxon>
        <taxon>Pseudomonadati</taxon>
        <taxon>Pseudomonadota</taxon>
        <taxon>Alphaproteobacteria</taxon>
        <taxon>Hyphomicrobiales</taxon>
        <taxon>Brucellaceae</taxon>
        <taxon>Brucella/Ochrobactrum group</taxon>
        <taxon>Brucella</taxon>
    </lineage>
</organism>
<keyword id="KW-0028">Amino-acid biosynthesis</keyword>
<keyword id="KW-0067">ATP-binding</keyword>
<keyword id="KW-0963">Cytoplasm</keyword>
<keyword id="KW-0368">Histidine biosynthesis</keyword>
<keyword id="KW-0378">Hydrolase</keyword>
<keyword id="KW-0547">Nucleotide-binding</keyword>
<sequence>MSQFTLADLERIVAERASVTDGTSYTASLVAKGQPKAAQKLGEEAVETVIAAVSGDRAGVVSESADLLYHLAVVWNIAGVALEDVLQELQRRTAQTGLAEKASRPKG</sequence>
<protein>
    <recommendedName>
        <fullName evidence="1">Phosphoribosyl-ATP pyrophosphatase</fullName>
        <shortName evidence="1">PRA-PH</shortName>
        <ecNumber evidence="1">3.6.1.31</ecNumber>
    </recommendedName>
</protein>
<gene>
    <name evidence="1" type="primary">hisE</name>
    <name type="ordered locus">BOV_2006</name>
</gene>
<evidence type="ECO:0000255" key="1">
    <source>
        <dbReference type="HAMAP-Rule" id="MF_01020"/>
    </source>
</evidence>
<comment type="catalytic activity">
    <reaction evidence="1">
        <text>1-(5-phospho-beta-D-ribosyl)-ATP + H2O = 1-(5-phospho-beta-D-ribosyl)-5'-AMP + diphosphate + H(+)</text>
        <dbReference type="Rhea" id="RHEA:22828"/>
        <dbReference type="ChEBI" id="CHEBI:15377"/>
        <dbReference type="ChEBI" id="CHEBI:15378"/>
        <dbReference type="ChEBI" id="CHEBI:33019"/>
        <dbReference type="ChEBI" id="CHEBI:59457"/>
        <dbReference type="ChEBI" id="CHEBI:73183"/>
        <dbReference type="EC" id="3.6.1.31"/>
    </reaction>
</comment>
<comment type="pathway">
    <text evidence="1">Amino-acid biosynthesis; L-histidine biosynthesis; L-histidine from 5-phospho-alpha-D-ribose 1-diphosphate: step 2/9.</text>
</comment>
<comment type="subcellular location">
    <subcellularLocation>
        <location evidence="1">Cytoplasm</location>
    </subcellularLocation>
</comment>
<comment type="similarity">
    <text evidence="1">Belongs to the PRA-PH family.</text>
</comment>
<reference key="1">
    <citation type="journal article" date="2009" name="PLoS ONE">
        <title>Genome degradation in Brucella ovis corresponds with narrowing of its host range and tissue tropism.</title>
        <authorList>
            <person name="Tsolis R.M."/>
            <person name="Seshadri R."/>
            <person name="Santos R.L."/>
            <person name="Sangari F.J."/>
            <person name="Lobo J.M."/>
            <person name="de Jong M.F."/>
            <person name="Ren Q."/>
            <person name="Myers G."/>
            <person name="Brinkac L.M."/>
            <person name="Nelson W.C."/>
            <person name="Deboy R.T."/>
            <person name="Angiuoli S."/>
            <person name="Khouri H."/>
            <person name="Dimitrov G."/>
            <person name="Robinson J.R."/>
            <person name="Mulligan S."/>
            <person name="Walker R.L."/>
            <person name="Elzer P.E."/>
            <person name="Hassan K.A."/>
            <person name="Paulsen I.T."/>
        </authorList>
    </citation>
    <scope>NUCLEOTIDE SEQUENCE [LARGE SCALE GENOMIC DNA]</scope>
    <source>
        <strain>ATCC 25840 / 63/290 / NCTC 10512</strain>
    </source>
</reference>
<name>HIS2_BRUO2</name>
<proteinExistence type="inferred from homology"/>
<accession>A5VT44</accession>
<feature type="chain" id="PRO_1000063323" description="Phosphoribosyl-ATP pyrophosphatase">
    <location>
        <begin position="1"/>
        <end position="107"/>
    </location>
</feature>